<dbReference type="EMBL" id="AACD01000081">
    <property type="protein sequence ID" value="EAA60353.1"/>
    <property type="status" value="ALT_SEQ"/>
    <property type="molecule type" value="Genomic_DNA"/>
</dbReference>
<dbReference type="EMBL" id="BN001303">
    <property type="protein sequence ID" value="CBF76790.1"/>
    <property type="molecule type" value="Genomic_DNA"/>
</dbReference>
<dbReference type="RefSeq" id="XP_662387.1">
    <property type="nucleotide sequence ID" value="XM_657295.1"/>
</dbReference>
<dbReference type="SMR" id="Q5B3U7"/>
<dbReference type="DIP" id="DIP-60926N"/>
<dbReference type="IntAct" id="Q5B3U7">
    <property type="interactions" value="4"/>
</dbReference>
<dbReference type="STRING" id="227321.Q5B3U7"/>
<dbReference type="EnsemblFungi" id="CBF76790">
    <property type="protein sequence ID" value="CBF76790"/>
    <property type="gene ID" value="ANIA_04783"/>
</dbReference>
<dbReference type="VEuPathDB" id="FungiDB:AN4783"/>
<dbReference type="eggNOG" id="KOG1464">
    <property type="taxonomic scope" value="Eukaryota"/>
</dbReference>
<dbReference type="HOGENOM" id="CLU_028981_0_1_1"/>
<dbReference type="InParanoid" id="Q5B3U7"/>
<dbReference type="OMA" id="SEENWKD"/>
<dbReference type="OrthoDB" id="194139at2759"/>
<dbReference type="Proteomes" id="UP000000560">
    <property type="component" value="Chromosome III"/>
</dbReference>
<dbReference type="GO" id="GO:0008180">
    <property type="term" value="C:COP9 signalosome"/>
    <property type="evidence" value="ECO:0000314"/>
    <property type="project" value="AspGD"/>
</dbReference>
<dbReference type="GO" id="GO:0005737">
    <property type="term" value="C:cytoplasm"/>
    <property type="evidence" value="ECO:0007669"/>
    <property type="project" value="UniProtKB-SubCell"/>
</dbReference>
<dbReference type="GO" id="GO:0070791">
    <property type="term" value="P:cleistothecium development"/>
    <property type="evidence" value="ECO:0000315"/>
    <property type="project" value="AspGD"/>
</dbReference>
<dbReference type="GO" id="GO:0000338">
    <property type="term" value="P:protein deneddylation"/>
    <property type="evidence" value="ECO:0000318"/>
    <property type="project" value="GO_Central"/>
</dbReference>
<dbReference type="FunFam" id="1.25.40.570:FF:000006">
    <property type="entry name" value="COP9 signalosome complex subunit 2"/>
    <property type="match status" value="1"/>
</dbReference>
<dbReference type="Gene3D" id="1.25.40.570">
    <property type="match status" value="1"/>
</dbReference>
<dbReference type="InterPro" id="IPR050871">
    <property type="entry name" value="26S_Proteasome/COP9_Components"/>
</dbReference>
<dbReference type="InterPro" id="IPR000717">
    <property type="entry name" value="PCI_dom"/>
</dbReference>
<dbReference type="InterPro" id="IPR036390">
    <property type="entry name" value="WH_DNA-bd_sf"/>
</dbReference>
<dbReference type="PANTHER" id="PTHR10678">
    <property type="entry name" value="26S PROTEASOME NON-ATPASE REGULATORY SUBUNIT 11/COP9 SIGNALOSOME COMPLEX SUBUNIT 2"/>
    <property type="match status" value="1"/>
</dbReference>
<dbReference type="Pfam" id="PF01399">
    <property type="entry name" value="PCI"/>
    <property type="match status" value="1"/>
</dbReference>
<dbReference type="SMART" id="SM00753">
    <property type="entry name" value="PAM"/>
    <property type="match status" value="1"/>
</dbReference>
<dbReference type="SMART" id="SM00088">
    <property type="entry name" value="PINT"/>
    <property type="match status" value="1"/>
</dbReference>
<dbReference type="SUPFAM" id="SSF46785">
    <property type="entry name" value="Winged helix' DNA-binding domain"/>
    <property type="match status" value="1"/>
</dbReference>
<dbReference type="PROSITE" id="PS50250">
    <property type="entry name" value="PCI"/>
    <property type="match status" value="1"/>
</dbReference>
<keyword id="KW-0963">Cytoplasm</keyword>
<keyword id="KW-0539">Nucleus</keyword>
<keyword id="KW-1185">Reference proteome</keyword>
<keyword id="KW-0736">Signalosome</keyword>
<organism>
    <name type="scientific">Emericella nidulans (strain FGSC A4 / ATCC 38163 / CBS 112.46 / NRRL 194 / M139)</name>
    <name type="common">Aspergillus nidulans</name>
    <dbReference type="NCBI Taxonomy" id="227321"/>
    <lineage>
        <taxon>Eukaryota</taxon>
        <taxon>Fungi</taxon>
        <taxon>Dikarya</taxon>
        <taxon>Ascomycota</taxon>
        <taxon>Pezizomycotina</taxon>
        <taxon>Eurotiomycetes</taxon>
        <taxon>Eurotiomycetidae</taxon>
        <taxon>Eurotiales</taxon>
        <taxon>Aspergillaceae</taxon>
        <taxon>Aspergillus</taxon>
        <taxon>Aspergillus subgen. Nidulantes</taxon>
    </lineage>
</organism>
<proteinExistence type="evidence at protein level"/>
<feature type="chain" id="PRO_0000314740" description="COP9 signalosome complex subunit 2">
    <location>
        <begin position="1"/>
        <end position="506"/>
    </location>
</feature>
<feature type="domain" description="PCI" evidence="2">
    <location>
        <begin position="252"/>
        <end position="420"/>
    </location>
</feature>
<feature type="region of interest" description="Disordered" evidence="3">
    <location>
        <begin position="482"/>
        <end position="506"/>
    </location>
</feature>
<feature type="compositionally biased region" description="Basic residues" evidence="3">
    <location>
        <begin position="482"/>
        <end position="491"/>
    </location>
</feature>
<feature type="compositionally biased region" description="Gly residues" evidence="3">
    <location>
        <begin position="492"/>
        <end position="506"/>
    </location>
</feature>
<accession>Q5B3U7</accession>
<accession>C8VAN5</accession>
<gene>
    <name type="primary">csnB</name>
    <name type="synonym">csn2</name>
    <name type="ORF">AN4783</name>
</gene>
<name>CSN2_EMENI</name>
<protein>
    <recommendedName>
        <fullName>COP9 signalosome complex subunit 2</fullName>
        <shortName>Signalosome subunit 2</shortName>
    </recommendedName>
</protein>
<evidence type="ECO:0000250" key="1"/>
<evidence type="ECO:0000255" key="2">
    <source>
        <dbReference type="PROSITE-ProRule" id="PRU01185"/>
    </source>
</evidence>
<evidence type="ECO:0000256" key="3">
    <source>
        <dbReference type="SAM" id="MobiDB-lite"/>
    </source>
</evidence>
<evidence type="ECO:0000269" key="4">
    <source>
    </source>
</evidence>
<evidence type="ECO:0000305" key="5"/>
<comment type="function">
    <text evidence="1 4">Component of the COP9 signalosome (CSN) complex that acts as an regulator of the ubiquitin (Ubl) conjugation pathway by mediating the deneddylation of the cullin subunit of SCF-type E3 ubiquitin-protein ligase complexes (By similarity). The CSN complex seems to link protein degradation to sexual development. Required for fruit body formation.</text>
</comment>
<comment type="subunit">
    <text evidence="4">Component of the COP9 signalosome (CSN) complex.</text>
</comment>
<comment type="subcellular location">
    <subcellularLocation>
        <location evidence="1">Cytoplasm</location>
    </subcellularLocation>
    <subcellularLocation>
        <location evidence="1">Nucleus</location>
    </subcellularLocation>
</comment>
<comment type="similarity">
    <text evidence="5">Belongs to the CSN2 family.</text>
</comment>
<comment type="sequence caution" evidence="5">
    <conflict type="erroneous gene model prediction">
        <sequence resource="EMBL-CDS" id="EAA60353"/>
    </conflict>
</comment>
<reference key="1">
    <citation type="journal article" date="2005" name="Nature">
        <title>Sequencing of Aspergillus nidulans and comparative analysis with A. fumigatus and A. oryzae.</title>
        <authorList>
            <person name="Galagan J.E."/>
            <person name="Calvo S.E."/>
            <person name="Cuomo C."/>
            <person name="Ma L.-J."/>
            <person name="Wortman J.R."/>
            <person name="Batzoglou S."/>
            <person name="Lee S.-I."/>
            <person name="Bastuerkmen M."/>
            <person name="Spevak C.C."/>
            <person name="Clutterbuck J."/>
            <person name="Kapitonov V."/>
            <person name="Jurka J."/>
            <person name="Scazzocchio C."/>
            <person name="Farman M.L."/>
            <person name="Butler J."/>
            <person name="Purcell S."/>
            <person name="Harris S."/>
            <person name="Braus G.H."/>
            <person name="Draht O."/>
            <person name="Busch S."/>
            <person name="D'Enfert C."/>
            <person name="Bouchier C."/>
            <person name="Goldman G.H."/>
            <person name="Bell-Pedersen D."/>
            <person name="Griffiths-Jones S."/>
            <person name="Doonan J.H."/>
            <person name="Yu J."/>
            <person name="Vienken K."/>
            <person name="Pain A."/>
            <person name="Freitag M."/>
            <person name="Selker E.U."/>
            <person name="Archer D.B."/>
            <person name="Penalva M.A."/>
            <person name="Oakley B.R."/>
            <person name="Momany M."/>
            <person name="Tanaka T."/>
            <person name="Kumagai T."/>
            <person name="Asai K."/>
            <person name="Machida M."/>
            <person name="Nierman W.C."/>
            <person name="Denning D.W."/>
            <person name="Caddick M.X."/>
            <person name="Hynes M."/>
            <person name="Paoletti M."/>
            <person name="Fischer R."/>
            <person name="Miller B.L."/>
            <person name="Dyer P.S."/>
            <person name="Sachs M.S."/>
            <person name="Osmani S.A."/>
            <person name="Birren B.W."/>
        </authorList>
    </citation>
    <scope>NUCLEOTIDE SEQUENCE [LARGE SCALE GENOMIC DNA]</scope>
    <source>
        <strain>FGSC A4 / ATCC 38163 / CBS 112.46 / NRRL 194 / M139</strain>
    </source>
</reference>
<reference key="2">
    <citation type="journal article" date="2009" name="Fungal Genet. Biol.">
        <title>The 2008 update of the Aspergillus nidulans genome annotation: a community effort.</title>
        <authorList>
            <person name="Wortman J.R."/>
            <person name="Gilsenan J.M."/>
            <person name="Joardar V."/>
            <person name="Deegan J."/>
            <person name="Clutterbuck J."/>
            <person name="Andersen M.R."/>
            <person name="Archer D."/>
            <person name="Bencina M."/>
            <person name="Braus G."/>
            <person name="Coutinho P."/>
            <person name="von Dohren H."/>
            <person name="Doonan J."/>
            <person name="Driessen A.J."/>
            <person name="Durek P."/>
            <person name="Espeso E."/>
            <person name="Fekete E."/>
            <person name="Flipphi M."/>
            <person name="Estrada C.G."/>
            <person name="Geysens S."/>
            <person name="Goldman G."/>
            <person name="de Groot P.W."/>
            <person name="Hansen K."/>
            <person name="Harris S.D."/>
            <person name="Heinekamp T."/>
            <person name="Helmstaedt K."/>
            <person name="Henrissat B."/>
            <person name="Hofmann G."/>
            <person name="Homan T."/>
            <person name="Horio T."/>
            <person name="Horiuchi H."/>
            <person name="James S."/>
            <person name="Jones M."/>
            <person name="Karaffa L."/>
            <person name="Karanyi Z."/>
            <person name="Kato M."/>
            <person name="Keller N."/>
            <person name="Kelly D.E."/>
            <person name="Kiel J.A."/>
            <person name="Kim J.M."/>
            <person name="van der Klei I.J."/>
            <person name="Klis F.M."/>
            <person name="Kovalchuk A."/>
            <person name="Krasevec N."/>
            <person name="Kubicek C.P."/>
            <person name="Liu B."/>
            <person name="Maccabe A."/>
            <person name="Meyer V."/>
            <person name="Mirabito P."/>
            <person name="Miskei M."/>
            <person name="Mos M."/>
            <person name="Mullins J."/>
            <person name="Nelson D.R."/>
            <person name="Nielsen J."/>
            <person name="Oakley B.R."/>
            <person name="Osmani S.A."/>
            <person name="Pakula T."/>
            <person name="Paszewski A."/>
            <person name="Paulsen I."/>
            <person name="Pilsyk S."/>
            <person name="Pocsi I."/>
            <person name="Punt P.J."/>
            <person name="Ram A.F."/>
            <person name="Ren Q."/>
            <person name="Robellet X."/>
            <person name="Robson G."/>
            <person name="Seiboth B."/>
            <person name="van Solingen P."/>
            <person name="Specht T."/>
            <person name="Sun J."/>
            <person name="Taheri-Talesh N."/>
            <person name="Takeshita N."/>
            <person name="Ussery D."/>
            <person name="vanKuyk P.A."/>
            <person name="Visser H."/>
            <person name="van de Vondervoort P.J."/>
            <person name="de Vries R.P."/>
            <person name="Walton J."/>
            <person name="Xiang X."/>
            <person name="Xiong Y."/>
            <person name="Zeng A.P."/>
            <person name="Brandt B.W."/>
            <person name="Cornell M.J."/>
            <person name="van den Hondel C.A."/>
            <person name="Visser J."/>
            <person name="Oliver S.G."/>
            <person name="Turner G."/>
        </authorList>
    </citation>
    <scope>GENOME REANNOTATION</scope>
    <source>
        <strain>FGSC A4 / ATCC 38163 / CBS 112.46 / NRRL 194 / M139</strain>
    </source>
</reference>
<reference key="3">
    <citation type="journal article" date="2007" name="Proc. Natl. Acad. Sci. U.S.A.">
        <title>An eight-subunit COP9 signalosome with an intact JAMM motif is required for fungal fruit body formation.</title>
        <authorList>
            <person name="Busch S."/>
            <person name="Schwier E.U."/>
            <person name="Nahlik K."/>
            <person name="Bayram O."/>
            <person name="Helmstaedt K."/>
            <person name="Draht O.W."/>
            <person name="Krappmann S."/>
            <person name="Valerius O."/>
            <person name="Lipscomb W.N."/>
            <person name="Braus G.H."/>
        </authorList>
    </citation>
    <scope>FUNCTION</scope>
    <scope>IDENTIFICATION IN THE CSN COMPLEX</scope>
    <scope>IDENTIFICATION BY MASS SPECTROMETRY</scope>
</reference>
<sequence length="506" mass="58113">MSDDDDFMHDSADEEYDFEYEDADDDETGDIGIENKYYNAKQIKVDNPEEAIDEFLGVPALEQDKGDWGFKGLKQAIKLEFKLGRYSDAVEHYRELLTYVKSAVTRNYSEKSINNMLDYIEKGSDDEKAYQCMEEFYSLTLNSFQNTNNERLWLKTNIKLARLWLERREYGQLSKKVRELHRACQREDGSDDPSKGTYLLELYALEIQMYAETKNNKRLKALYQRALRVRSAVPHPKIMGIIRECGGKMHMSEENWEEAQSDFFESFRNYDEAGSMQRIQVLKYLVLTTMLMKSDINPFHSQETKPYKTDPRISAMTDLVDAFQRDDIHAYEEVLSKNPDVLADPFIAENIDEVSRNMRTKAILKLIAPYTRFTLSFISKHIKISVTEAQDILSFLILDKKLNAKIDQESGTVVVESASDVERLRSVEEWNESLRTLWQVTLKDGDGFKNDDVSQPTGIGMRGPLLYQSGLDDDTAGLLRSSGHRFRRGGKGSKAGGGLGMKTGLF</sequence>